<dbReference type="EC" id="2.1.2.9" evidence="1"/>
<dbReference type="EMBL" id="CP000023">
    <property type="protein sequence ID" value="AAV61041.1"/>
    <property type="molecule type" value="Genomic_DNA"/>
</dbReference>
<dbReference type="RefSeq" id="WP_002951411.1">
    <property type="nucleotide sequence ID" value="NC_006448.1"/>
</dbReference>
<dbReference type="SMR" id="Q5M3I7"/>
<dbReference type="STRING" id="264199.stu1428"/>
<dbReference type="GeneID" id="66899189"/>
<dbReference type="KEGG" id="stl:stu1428"/>
<dbReference type="PATRIC" id="fig|264199.4.peg.1402"/>
<dbReference type="eggNOG" id="COG0223">
    <property type="taxonomic scope" value="Bacteria"/>
</dbReference>
<dbReference type="HOGENOM" id="CLU_033347_1_1_9"/>
<dbReference type="Proteomes" id="UP000001170">
    <property type="component" value="Chromosome"/>
</dbReference>
<dbReference type="GO" id="GO:0005829">
    <property type="term" value="C:cytosol"/>
    <property type="evidence" value="ECO:0007669"/>
    <property type="project" value="TreeGrafter"/>
</dbReference>
<dbReference type="GO" id="GO:0004479">
    <property type="term" value="F:methionyl-tRNA formyltransferase activity"/>
    <property type="evidence" value="ECO:0007669"/>
    <property type="project" value="UniProtKB-UniRule"/>
</dbReference>
<dbReference type="CDD" id="cd08646">
    <property type="entry name" value="FMT_core_Met-tRNA-FMT_N"/>
    <property type="match status" value="1"/>
</dbReference>
<dbReference type="CDD" id="cd08704">
    <property type="entry name" value="Met_tRNA_FMT_C"/>
    <property type="match status" value="1"/>
</dbReference>
<dbReference type="FunFam" id="3.40.50.170:FF:000004">
    <property type="entry name" value="Methionyl-tRNA formyltransferase"/>
    <property type="match status" value="1"/>
</dbReference>
<dbReference type="Gene3D" id="3.10.25.10">
    <property type="entry name" value="Formyl transferase, C-terminal domain"/>
    <property type="match status" value="1"/>
</dbReference>
<dbReference type="Gene3D" id="3.40.50.170">
    <property type="entry name" value="Formyl transferase, N-terminal domain"/>
    <property type="match status" value="1"/>
</dbReference>
<dbReference type="HAMAP" id="MF_00182">
    <property type="entry name" value="Formyl_trans"/>
    <property type="match status" value="1"/>
</dbReference>
<dbReference type="InterPro" id="IPR005794">
    <property type="entry name" value="Fmt"/>
</dbReference>
<dbReference type="InterPro" id="IPR005793">
    <property type="entry name" value="Formyl_trans_C"/>
</dbReference>
<dbReference type="InterPro" id="IPR037022">
    <property type="entry name" value="Formyl_trans_C_sf"/>
</dbReference>
<dbReference type="InterPro" id="IPR002376">
    <property type="entry name" value="Formyl_transf_N"/>
</dbReference>
<dbReference type="InterPro" id="IPR036477">
    <property type="entry name" value="Formyl_transf_N_sf"/>
</dbReference>
<dbReference type="InterPro" id="IPR011034">
    <property type="entry name" value="Formyl_transferase-like_C_sf"/>
</dbReference>
<dbReference type="InterPro" id="IPR001555">
    <property type="entry name" value="GART_AS"/>
</dbReference>
<dbReference type="InterPro" id="IPR044135">
    <property type="entry name" value="Met-tRNA-FMT_C"/>
</dbReference>
<dbReference type="InterPro" id="IPR041711">
    <property type="entry name" value="Met-tRNA-FMT_N"/>
</dbReference>
<dbReference type="NCBIfam" id="TIGR00460">
    <property type="entry name" value="fmt"/>
    <property type="match status" value="1"/>
</dbReference>
<dbReference type="PANTHER" id="PTHR11138">
    <property type="entry name" value="METHIONYL-TRNA FORMYLTRANSFERASE"/>
    <property type="match status" value="1"/>
</dbReference>
<dbReference type="PANTHER" id="PTHR11138:SF5">
    <property type="entry name" value="METHIONYL-TRNA FORMYLTRANSFERASE, MITOCHONDRIAL"/>
    <property type="match status" value="1"/>
</dbReference>
<dbReference type="Pfam" id="PF02911">
    <property type="entry name" value="Formyl_trans_C"/>
    <property type="match status" value="1"/>
</dbReference>
<dbReference type="Pfam" id="PF00551">
    <property type="entry name" value="Formyl_trans_N"/>
    <property type="match status" value="1"/>
</dbReference>
<dbReference type="SUPFAM" id="SSF50486">
    <property type="entry name" value="FMT C-terminal domain-like"/>
    <property type="match status" value="1"/>
</dbReference>
<dbReference type="SUPFAM" id="SSF53328">
    <property type="entry name" value="Formyltransferase"/>
    <property type="match status" value="1"/>
</dbReference>
<dbReference type="PROSITE" id="PS00373">
    <property type="entry name" value="GART"/>
    <property type="match status" value="1"/>
</dbReference>
<organism>
    <name type="scientific">Streptococcus thermophilus (strain ATCC BAA-250 / LMG 18311)</name>
    <dbReference type="NCBI Taxonomy" id="264199"/>
    <lineage>
        <taxon>Bacteria</taxon>
        <taxon>Bacillati</taxon>
        <taxon>Bacillota</taxon>
        <taxon>Bacilli</taxon>
        <taxon>Lactobacillales</taxon>
        <taxon>Streptococcaceae</taxon>
        <taxon>Streptococcus</taxon>
    </lineage>
</organism>
<evidence type="ECO:0000255" key="1">
    <source>
        <dbReference type="HAMAP-Rule" id="MF_00182"/>
    </source>
</evidence>
<name>FMT_STRT2</name>
<sequence length="311" mass="33848">MTKIIFMGTPAFSATVLEGLLTDERYDIVAVVTQPDRAVGRKKEIRMTPVKELALAHELPIYQPEKLSGSEEMAQLISLGADGIVTAAYGQFLPSKLLDSMDFAVNVHASLLPKYRGGAPIHYAIINGDAEAGVTIMEMVKEMDAGDMVSQKALPILDQDNVGTMFEKLAVLGRDLLLETLPAYIAGEIKPVPQDASQVTFSPNISPEEERLDWNKSGRDIFNQIRGMYPWPVAHTLLNGKRFKIYEGDLVEGQGQAGHIIEKTKKSLVVATGQGAISLKSVQPEGKPRMAIADFLNGVGRNLEVGDVFGQ</sequence>
<gene>
    <name evidence="1" type="primary">fmt</name>
    <name type="ordered locus">stu1428</name>
</gene>
<accession>Q5M3I7</accession>
<proteinExistence type="inferred from homology"/>
<feature type="chain" id="PRO_0000083065" description="Methionyl-tRNA formyltransferase">
    <location>
        <begin position="1"/>
        <end position="311"/>
    </location>
</feature>
<feature type="binding site" evidence="1">
    <location>
        <begin position="110"/>
        <end position="113"/>
    </location>
    <ligand>
        <name>(6S)-5,6,7,8-tetrahydrofolate</name>
        <dbReference type="ChEBI" id="CHEBI:57453"/>
    </ligand>
</feature>
<reference key="1">
    <citation type="journal article" date="2004" name="Nat. Biotechnol.">
        <title>Complete sequence and comparative genome analysis of the dairy bacterium Streptococcus thermophilus.</title>
        <authorList>
            <person name="Bolotin A."/>
            <person name="Quinquis B."/>
            <person name="Renault P."/>
            <person name="Sorokin A."/>
            <person name="Ehrlich S.D."/>
            <person name="Kulakauskas S."/>
            <person name="Lapidus A."/>
            <person name="Goltsman E."/>
            <person name="Mazur M."/>
            <person name="Pusch G.D."/>
            <person name="Fonstein M."/>
            <person name="Overbeek R."/>
            <person name="Kyprides N."/>
            <person name="Purnelle B."/>
            <person name="Prozzi D."/>
            <person name="Ngui K."/>
            <person name="Masuy D."/>
            <person name="Hancy F."/>
            <person name="Burteau S."/>
            <person name="Boutry M."/>
            <person name="Delcour J."/>
            <person name="Goffeau A."/>
            <person name="Hols P."/>
        </authorList>
    </citation>
    <scope>NUCLEOTIDE SEQUENCE [LARGE SCALE GENOMIC DNA]</scope>
    <source>
        <strain>ATCC BAA-250 / LMG 18311</strain>
    </source>
</reference>
<protein>
    <recommendedName>
        <fullName evidence="1">Methionyl-tRNA formyltransferase</fullName>
        <ecNumber evidence="1">2.1.2.9</ecNumber>
    </recommendedName>
</protein>
<comment type="function">
    <text evidence="1">Attaches a formyl group to the free amino group of methionyl-tRNA(fMet). The formyl group appears to play a dual role in the initiator identity of N-formylmethionyl-tRNA by promoting its recognition by IF2 and preventing the misappropriation of this tRNA by the elongation apparatus.</text>
</comment>
<comment type="catalytic activity">
    <reaction evidence="1">
        <text>L-methionyl-tRNA(fMet) + (6R)-10-formyltetrahydrofolate = N-formyl-L-methionyl-tRNA(fMet) + (6S)-5,6,7,8-tetrahydrofolate + H(+)</text>
        <dbReference type="Rhea" id="RHEA:24380"/>
        <dbReference type="Rhea" id="RHEA-COMP:9952"/>
        <dbReference type="Rhea" id="RHEA-COMP:9953"/>
        <dbReference type="ChEBI" id="CHEBI:15378"/>
        <dbReference type="ChEBI" id="CHEBI:57453"/>
        <dbReference type="ChEBI" id="CHEBI:78530"/>
        <dbReference type="ChEBI" id="CHEBI:78844"/>
        <dbReference type="ChEBI" id="CHEBI:195366"/>
        <dbReference type="EC" id="2.1.2.9"/>
    </reaction>
</comment>
<comment type="similarity">
    <text evidence="1">Belongs to the Fmt family.</text>
</comment>
<keyword id="KW-0648">Protein biosynthesis</keyword>
<keyword id="KW-1185">Reference proteome</keyword>
<keyword id="KW-0808">Transferase</keyword>